<comment type="function">
    <text evidence="1">May mediate the uptake of pyruvate into mitochondria.</text>
</comment>
<comment type="subcellular location">
    <subcellularLocation>
        <location evidence="1">Mitochondrion inner membrane</location>
        <topology>Multi-pass membrane protein</topology>
    </subcellularLocation>
</comment>
<comment type="similarity">
    <text evidence="3">Belongs to the mitochondrial pyruvate carrier (MPC) (TC 2.A.105) family.</text>
</comment>
<protein>
    <recommendedName>
        <fullName>Probable mitochondrial pyruvate carrier 2</fullName>
        <shortName>MPC2</shortName>
    </recommendedName>
</protein>
<organism>
    <name type="scientific">Dictyostelium discoideum</name>
    <name type="common">Social amoeba</name>
    <dbReference type="NCBI Taxonomy" id="44689"/>
    <lineage>
        <taxon>Eukaryota</taxon>
        <taxon>Amoebozoa</taxon>
        <taxon>Evosea</taxon>
        <taxon>Eumycetozoa</taxon>
        <taxon>Dictyostelia</taxon>
        <taxon>Dictyosteliales</taxon>
        <taxon>Dictyosteliaceae</taxon>
        <taxon>Dictyostelium</taxon>
    </lineage>
</organism>
<evidence type="ECO:0000250" key="1">
    <source>
        <dbReference type="UniProtKB" id="P38857"/>
    </source>
</evidence>
<evidence type="ECO:0000255" key="2"/>
<evidence type="ECO:0000305" key="3"/>
<accession>Q55GU3</accession>
<keyword id="KW-0472">Membrane</keyword>
<keyword id="KW-0496">Mitochondrion</keyword>
<keyword id="KW-0999">Mitochondrion inner membrane</keyword>
<keyword id="KW-1185">Reference proteome</keyword>
<keyword id="KW-0812">Transmembrane</keyword>
<keyword id="KW-1133">Transmembrane helix</keyword>
<keyword id="KW-0813">Transport</keyword>
<reference key="1">
    <citation type="journal article" date="2005" name="Nature">
        <title>The genome of the social amoeba Dictyostelium discoideum.</title>
        <authorList>
            <person name="Eichinger L."/>
            <person name="Pachebat J.A."/>
            <person name="Gloeckner G."/>
            <person name="Rajandream M.A."/>
            <person name="Sucgang R."/>
            <person name="Berriman M."/>
            <person name="Song J."/>
            <person name="Olsen R."/>
            <person name="Szafranski K."/>
            <person name="Xu Q."/>
            <person name="Tunggal B."/>
            <person name="Kummerfeld S."/>
            <person name="Madera M."/>
            <person name="Konfortov B.A."/>
            <person name="Rivero F."/>
            <person name="Bankier A.T."/>
            <person name="Lehmann R."/>
            <person name="Hamlin N."/>
            <person name="Davies R."/>
            <person name="Gaudet P."/>
            <person name="Fey P."/>
            <person name="Pilcher K."/>
            <person name="Chen G."/>
            <person name="Saunders D."/>
            <person name="Sodergren E.J."/>
            <person name="Davis P."/>
            <person name="Kerhornou A."/>
            <person name="Nie X."/>
            <person name="Hall N."/>
            <person name="Anjard C."/>
            <person name="Hemphill L."/>
            <person name="Bason N."/>
            <person name="Farbrother P."/>
            <person name="Desany B."/>
            <person name="Just E."/>
            <person name="Morio T."/>
            <person name="Rost R."/>
            <person name="Churcher C.M."/>
            <person name="Cooper J."/>
            <person name="Haydock S."/>
            <person name="van Driessche N."/>
            <person name="Cronin A."/>
            <person name="Goodhead I."/>
            <person name="Muzny D.M."/>
            <person name="Mourier T."/>
            <person name="Pain A."/>
            <person name="Lu M."/>
            <person name="Harper D."/>
            <person name="Lindsay R."/>
            <person name="Hauser H."/>
            <person name="James K.D."/>
            <person name="Quiles M."/>
            <person name="Madan Babu M."/>
            <person name="Saito T."/>
            <person name="Buchrieser C."/>
            <person name="Wardroper A."/>
            <person name="Felder M."/>
            <person name="Thangavelu M."/>
            <person name="Johnson D."/>
            <person name="Knights A."/>
            <person name="Loulseged H."/>
            <person name="Mungall K.L."/>
            <person name="Oliver K."/>
            <person name="Price C."/>
            <person name="Quail M.A."/>
            <person name="Urushihara H."/>
            <person name="Hernandez J."/>
            <person name="Rabbinowitsch E."/>
            <person name="Steffen D."/>
            <person name="Sanders M."/>
            <person name="Ma J."/>
            <person name="Kohara Y."/>
            <person name="Sharp S."/>
            <person name="Simmonds M.N."/>
            <person name="Spiegler S."/>
            <person name="Tivey A."/>
            <person name="Sugano S."/>
            <person name="White B."/>
            <person name="Walker D."/>
            <person name="Woodward J.R."/>
            <person name="Winckler T."/>
            <person name="Tanaka Y."/>
            <person name="Shaulsky G."/>
            <person name="Schleicher M."/>
            <person name="Weinstock G.M."/>
            <person name="Rosenthal A."/>
            <person name="Cox E.C."/>
            <person name="Chisholm R.L."/>
            <person name="Gibbs R.A."/>
            <person name="Loomis W.F."/>
            <person name="Platzer M."/>
            <person name="Kay R.R."/>
            <person name="Williams J.G."/>
            <person name="Dear P.H."/>
            <person name="Noegel A.A."/>
            <person name="Barrell B.G."/>
            <person name="Kuspa A."/>
        </authorList>
    </citation>
    <scope>NUCLEOTIDE SEQUENCE [LARGE SCALE GENOMIC DNA]</scope>
    <source>
        <strain>AX4</strain>
    </source>
</reference>
<sequence length="133" mass="14936">MNALRGLLNKYTGNQIVFSNKYATTFFEKFPKLAFLNNVTNLAPMMKWSLSIVPITQILSGTKLPENIDVYQASSLCATGSIWTYYATLISPQNTGTRMLAACNAAMAACHGYNIYRRTKWEKSQIIPIENKN</sequence>
<feature type="chain" id="PRO_0000350551" description="Probable mitochondrial pyruvate carrier 2">
    <location>
        <begin position="1"/>
        <end position="133"/>
    </location>
</feature>
<feature type="transmembrane region" description="Helical" evidence="2">
    <location>
        <begin position="39"/>
        <end position="55"/>
    </location>
</feature>
<feature type="transmembrane region" description="Helical" evidence="2">
    <location>
        <begin position="73"/>
        <end position="91"/>
    </location>
</feature>
<feature type="transmembrane region" description="Helical" evidence="2">
    <location>
        <begin position="99"/>
        <end position="116"/>
    </location>
</feature>
<proteinExistence type="inferred from homology"/>
<gene>
    <name type="ORF">DDB_G0268478</name>
</gene>
<dbReference type="EMBL" id="AAFI02000003">
    <property type="protein sequence ID" value="EAL73692.1"/>
    <property type="molecule type" value="Genomic_DNA"/>
</dbReference>
<dbReference type="RefSeq" id="XP_647091.1">
    <property type="nucleotide sequence ID" value="XM_641999.1"/>
</dbReference>
<dbReference type="STRING" id="44689.Q55GU3"/>
<dbReference type="PaxDb" id="44689-DDB0266858"/>
<dbReference type="EnsemblProtists" id="EAL73692">
    <property type="protein sequence ID" value="EAL73692"/>
    <property type="gene ID" value="DDB_G0268478"/>
</dbReference>
<dbReference type="GeneID" id="8615895"/>
<dbReference type="KEGG" id="ddi:DDB_G0268478"/>
<dbReference type="dictyBase" id="DDB_G0268478"/>
<dbReference type="VEuPathDB" id="AmoebaDB:DDB_G0268478"/>
<dbReference type="eggNOG" id="ENOG502S29Z">
    <property type="taxonomic scope" value="Eukaryota"/>
</dbReference>
<dbReference type="HOGENOM" id="CLU_1900480_0_0_1"/>
<dbReference type="InParanoid" id="Q55GU3"/>
<dbReference type="OMA" id="MKWSLSI"/>
<dbReference type="PhylomeDB" id="Q55GU3"/>
<dbReference type="PRO" id="PR:Q55GU3"/>
<dbReference type="Proteomes" id="UP000002195">
    <property type="component" value="Chromosome 1"/>
</dbReference>
<dbReference type="GO" id="GO:0005743">
    <property type="term" value="C:mitochondrial inner membrane"/>
    <property type="evidence" value="ECO:0000318"/>
    <property type="project" value="GO_Central"/>
</dbReference>
<dbReference type="GO" id="GO:0050833">
    <property type="term" value="F:pyruvate transmembrane transporter activity"/>
    <property type="evidence" value="ECO:0000318"/>
    <property type="project" value="GO_Central"/>
</dbReference>
<dbReference type="GO" id="GO:0006850">
    <property type="term" value="P:mitochondrial pyruvate transmembrane transport"/>
    <property type="evidence" value="ECO:0000318"/>
    <property type="project" value="GO_Central"/>
</dbReference>
<dbReference type="InterPro" id="IPR005336">
    <property type="entry name" value="MPC"/>
</dbReference>
<dbReference type="Pfam" id="PF03650">
    <property type="entry name" value="MPC"/>
    <property type="match status" value="1"/>
</dbReference>
<name>MPC2_DICDI</name>